<name>FYV1_HUMAN</name>
<feature type="initiator methionine" description="Removed" evidence="33 34">
    <location>
        <position position="1"/>
    </location>
</feature>
<feature type="chain" id="PRO_0000185452" description="1-phosphatidylinositol 3-phosphate 5-kinase">
    <location>
        <begin position="2"/>
        <end position="2098"/>
    </location>
</feature>
<feature type="domain" description="DEP" evidence="2">
    <location>
        <begin position="365"/>
        <end position="440"/>
    </location>
</feature>
<feature type="domain" description="PIPK" evidence="4">
    <location>
        <begin position="1758"/>
        <end position="2084"/>
    </location>
</feature>
<feature type="zinc finger region" description="FYVE-type" evidence="3">
    <location>
        <begin position="158"/>
        <end position="218"/>
    </location>
</feature>
<feature type="region of interest" description="Disordered" evidence="5">
    <location>
        <begin position="1"/>
        <end position="45"/>
    </location>
</feature>
<feature type="region of interest" description="Disordered" evidence="5">
    <location>
        <begin position="57"/>
        <end position="123"/>
    </location>
</feature>
<feature type="region of interest" description="Disordered" evidence="5">
    <location>
        <begin position="292"/>
        <end position="329"/>
    </location>
</feature>
<feature type="region of interest" description="Disordered" evidence="5">
    <location>
        <begin position="442"/>
        <end position="469"/>
    </location>
</feature>
<feature type="region of interest" description="Disordered" evidence="5">
    <location>
        <begin position="484"/>
        <end position="505"/>
    </location>
</feature>
<feature type="region of interest" description="Chaperonin-like domain" evidence="1">
    <location>
        <begin position="616"/>
        <end position="868"/>
    </location>
</feature>
<feature type="region of interest" description="Disordered" evidence="5">
    <location>
        <begin position="1161"/>
        <end position="1191"/>
    </location>
</feature>
<feature type="region of interest" description="Disordered" evidence="5">
    <location>
        <begin position="1512"/>
        <end position="1616"/>
    </location>
</feature>
<feature type="region of interest" description="Disordered" evidence="5">
    <location>
        <begin position="1692"/>
        <end position="1799"/>
    </location>
</feature>
<feature type="region of interest" description="Catalytic">
    <location>
        <begin position="1842"/>
        <end position="2098"/>
    </location>
</feature>
<feature type="compositionally biased region" description="Polar residues" evidence="5">
    <location>
        <begin position="66"/>
        <end position="88"/>
    </location>
</feature>
<feature type="compositionally biased region" description="Polar residues" evidence="5">
    <location>
        <begin position="302"/>
        <end position="315"/>
    </location>
</feature>
<feature type="compositionally biased region" description="Polar residues" evidence="5">
    <location>
        <begin position="442"/>
        <end position="459"/>
    </location>
</feature>
<feature type="compositionally biased region" description="Basic and acidic residues" evidence="5">
    <location>
        <begin position="460"/>
        <end position="469"/>
    </location>
</feature>
<feature type="compositionally biased region" description="Polar residues" evidence="5">
    <location>
        <begin position="488"/>
        <end position="505"/>
    </location>
</feature>
<feature type="compositionally biased region" description="Low complexity" evidence="5">
    <location>
        <begin position="1177"/>
        <end position="1186"/>
    </location>
</feature>
<feature type="compositionally biased region" description="Low complexity" evidence="5">
    <location>
        <begin position="1562"/>
        <end position="1578"/>
    </location>
</feature>
<feature type="compositionally biased region" description="Low complexity" evidence="5">
    <location>
        <begin position="1704"/>
        <end position="1714"/>
    </location>
</feature>
<feature type="compositionally biased region" description="Polar residues" evidence="5">
    <location>
        <begin position="1723"/>
        <end position="1735"/>
    </location>
</feature>
<feature type="binding site" evidence="3">
    <location>
        <position position="164"/>
    </location>
    <ligand>
        <name>Zn(2+)</name>
        <dbReference type="ChEBI" id="CHEBI:29105"/>
        <label>1</label>
    </ligand>
</feature>
<feature type="binding site" evidence="3">
    <location>
        <position position="167"/>
    </location>
    <ligand>
        <name>Zn(2+)</name>
        <dbReference type="ChEBI" id="CHEBI:29105"/>
        <label>1</label>
    </ligand>
</feature>
<feature type="binding site" evidence="3">
    <location>
        <position position="180"/>
    </location>
    <ligand>
        <name>Zn(2+)</name>
        <dbReference type="ChEBI" id="CHEBI:29105"/>
        <label>2</label>
    </ligand>
</feature>
<feature type="binding site" evidence="3">
    <location>
        <position position="183"/>
    </location>
    <ligand>
        <name>Zn(2+)</name>
        <dbReference type="ChEBI" id="CHEBI:29105"/>
        <label>2</label>
    </ligand>
</feature>
<feature type="binding site" evidence="3">
    <location>
        <position position="188"/>
    </location>
    <ligand>
        <name>Zn(2+)</name>
        <dbReference type="ChEBI" id="CHEBI:29105"/>
        <label>1</label>
    </ligand>
</feature>
<feature type="binding site" evidence="3">
    <location>
        <position position="191"/>
    </location>
    <ligand>
        <name>Zn(2+)</name>
        <dbReference type="ChEBI" id="CHEBI:29105"/>
        <label>1</label>
    </ligand>
</feature>
<feature type="binding site" evidence="3">
    <location>
        <position position="210"/>
    </location>
    <ligand>
        <name>Zn(2+)</name>
        <dbReference type="ChEBI" id="CHEBI:29105"/>
        <label>2</label>
    </ligand>
</feature>
<feature type="binding site" evidence="3">
    <location>
        <position position="213"/>
    </location>
    <ligand>
        <name>Zn(2+)</name>
        <dbReference type="ChEBI" id="CHEBI:29105"/>
        <label>2</label>
    </ligand>
</feature>
<feature type="modified residue" description="N-acetylalanine" evidence="33 34">
    <location>
        <position position="2"/>
    </location>
</feature>
<feature type="modified residue" description="Phosphoserine; by autocatalysis" evidence="20">
    <location>
        <position position="23"/>
    </location>
</feature>
<feature type="modified residue" description="Phosphoserine; by autocatalysis" evidence="20 35">
    <location>
        <position position="48"/>
    </location>
</feature>
<feature type="modified residue" description="Phosphoserine" evidence="35">
    <location>
        <position position="88"/>
    </location>
</feature>
<feature type="modified residue" description="Phosphoserine" evidence="32 33 35">
    <location>
        <position position="299"/>
    </location>
</feature>
<feature type="modified residue" description="Phosphoserine" evidence="35">
    <location>
        <position position="307"/>
    </location>
</feature>
<feature type="modified residue" description="Phosphoserine" evidence="1">
    <location>
        <position position="312"/>
    </location>
</feature>
<feature type="modified residue" description="Phosphoserine; by PKB/AKT1 or PKB/AKT2" evidence="13">
    <location>
        <position position="318"/>
    </location>
</feature>
<feature type="modified residue" description="Phosphoserine" evidence="31">
    <location>
        <position position="329"/>
    </location>
</feature>
<feature type="modified residue" description="Phosphoserine" evidence="1">
    <location>
        <position position="475"/>
    </location>
</feature>
<feature type="modified residue" description="Phosphoserine; by autocatalysis" evidence="20">
    <location>
        <position position="1522"/>
    </location>
</feature>
<feature type="modified residue" description="Phosphoserine" evidence="32 33 35">
    <location>
        <position position="1544"/>
    </location>
</feature>
<feature type="modified residue" description="Phosphoserine" evidence="33 35">
    <location>
        <position position="1549"/>
    </location>
</feature>
<feature type="modified residue" description="Phosphoserine; by autocatalysis" evidence="20">
    <location>
        <position position="1669"/>
    </location>
</feature>
<feature type="modified residue" description="Phosphoserine" evidence="33">
    <location>
        <position position="1754"/>
    </location>
</feature>
<feature type="modified residue" description="Phosphoserine; by autocatalysis" evidence="20">
    <location>
        <position position="1969"/>
    </location>
</feature>
<feature type="modified residue" description="Phosphoserine; by autocatalysis" evidence="20">
    <location>
        <position position="2053"/>
    </location>
</feature>
<feature type="splice variant" id="VSP_040108" description="In isoform 2." evidence="23">
    <location>
        <begin position="108"/>
        <end position="204"/>
    </location>
</feature>
<feature type="splice variant" id="VSP_040109" description="In isoform 3." evidence="23">
    <original>TRRKAEPTFGGHDPRTAVQLRSLSTVLKRLKEIMEGKSQDSDLKQYWMPDSQCKECYDCSEKFTTFRRRHHCRLCGQIFCSRCCNQEIPGKFMGY</original>
    <variation>NSLQHPQEN</variation>
    <location>
        <begin position="109"/>
        <end position="203"/>
    </location>
</feature>
<feature type="splice variant" id="VSP_040110" description="In isoform 2, isoform 3 and isoform 4." evidence="23">
    <original>EYL</original>
    <variation>GRR</variation>
    <location>
        <begin position="546"/>
        <end position="548"/>
    </location>
</feature>
<feature type="splice variant" id="VSP_040111" description="In isoform 2, isoform 3 and isoform 4." evidence="23">
    <location>
        <begin position="549"/>
        <end position="2098"/>
    </location>
</feature>
<feature type="sequence variant" id="VAR_057097" description="In dbSNP:rs16840913.">
    <original>M</original>
    <variation>V</variation>
    <location>
        <position position="617"/>
    </location>
</feature>
<feature type="sequence variant" id="VAR_063406" description="In dbSNP:rs10932258." evidence="21 22">
    <original>S</original>
    <variation>N</variation>
    <location>
        <position position="696"/>
    </location>
</feature>
<feature type="sequence variant" id="VAR_063407" description="In dbSNP:rs2363468." evidence="21 22">
    <original>L</original>
    <variation>S</variation>
    <location>
        <position position="932"/>
    </location>
</feature>
<feature type="sequence variant" id="VAR_083736" description="In CFD." evidence="9">
    <location>
        <begin position="988"/>
        <end position="2098"/>
    </location>
</feature>
<feature type="sequence variant" id="VAR_063408" description="In dbSNP:rs893254." evidence="21 22">
    <original>Q</original>
    <variation>L</variation>
    <location>
        <position position="995"/>
    </location>
</feature>
<feature type="sequence variant" id="VAR_063409" description="In dbSNP:rs893253." evidence="21 22">
    <original>T</original>
    <variation>S</variation>
    <location>
        <position position="998"/>
    </location>
</feature>
<feature type="sequence variant" id="VAR_057098" description="In dbSNP:rs999890.">
    <original>S</original>
    <variation>A</variation>
    <location>
        <position position="1033"/>
    </location>
</feature>
<feature type="sequence variant" id="VAR_025309" description="In CFD; dbSNP:rs121918336." evidence="9">
    <original>K</original>
    <variation>R</variation>
    <location>
        <position position="1103"/>
    </location>
</feature>
<feature type="sequence variant" id="VAR_063410" description="In dbSNP:rs1529979." evidence="8 21 22">
    <original>Q</original>
    <variation>K</variation>
    <location>
        <position position="1183"/>
    </location>
</feature>
<feature type="sequence variant" id="VAR_057099" description="In dbSNP:rs2289170.">
    <original>R</original>
    <variation>Q</variation>
    <location>
        <position position="1858"/>
    </location>
</feature>
<feature type="mutagenesis site" description="Loss of autophosphorylation. Loss of phosphatidylinositol 3-phosphate 5-kinase activity." evidence="20">
    <original>K</original>
    <variation>E</variation>
    <location>
        <position position="1877"/>
    </location>
</feature>
<feature type="mutagenesis site" description="No effect on phosphatidylinositol 3-phosphate 5-kinase activity." evidence="20">
    <original>S</original>
    <variation>A</variation>
    <location>
        <position position="2053"/>
    </location>
</feature>
<feature type="mutagenesis site" description="Reduces 2-folds phosphatidylinositol 3-phosphate 5-kinase activity." evidence="20">
    <original>S</original>
    <variation>E</variation>
    <location>
        <position position="2053"/>
    </location>
</feature>
<feature type="sequence conflict" description="In Ref. 5; BAC03674." evidence="25" ref="5">
    <original>M</original>
    <variation>I</variation>
    <location>
        <position position="1335"/>
    </location>
</feature>
<feature type="sequence conflict" description="In Ref. 5; BAC03674." evidence="25" ref="5">
    <original>L</original>
    <variation>S</variation>
    <location>
        <position position="2019"/>
    </location>
</feature>
<comment type="function">
    <text evidence="1 10 11 14 15 16 17 18 20 24">Dual specificity kinase implicated in myriad essential cellular processes such as maintenance of endomembrane homeostasis, and endocytic-vacuolar pathway, lysosomal trafficking, nuclear transport, stress- or hormone-induced signaling and cell cycle progression (PubMed:23086417). The PI(3,5)P2 regulatory complex regulates both the synthesis and turnover of phosphatidylinositol 3,5-bisphosphate (PtdIns(3,5)P2). Sole enzyme to catalyze the phosphorylation of phosphatidylinositol 3-phosphate on the fifth hydroxyl of the myo-inositol ring, to form (PtdIns(3,5)P2) (PubMed:17556371). Also catalyzes the phosphorylation of phosphatidylinositol on the fifth hydroxyl of the myo-inositol ring, to form phosphatidylinositol 5-phosphate (PtdIns(5)P) (PubMed:22621786). Has serine-protein kinase activity and is able to autophosphorylate and transphosphorylate. Autophosphorylation inhibits its own phosphatidylinositol 3-phosphate 5-kinase activity, stimulates FIG4 lipid phosphatase activity and down-regulates lipid product formation (PubMed:33098764). Involved in key endosome operations such as fission and fusion in the course of endosomal cargo transport (PubMed:22621786). Required for the maturation of early into late endosomes, phagosomes and lysosomes (PubMed:30612035). Regulates vacuole maturation and nutrient recovery following engulfment of macromolecules, initiates the redistribution of accumulated lysosomal contents back into the endosome network (PubMed:27623384). Critical regulator of the morphology, degradative activity, and protein turnover of the endolysosomal system in macrophages and platelets (By similarity). In neutrophils, critical to perform chemotaxis, generate ROS, and undertake phagosome fusion with lysosomes (PubMed:28779020). Plays a key role in the processing and presentation of antigens by major histocompatibility complex class II (MHC class II) mediated by CTSS (PubMed:30612035). Regulates melanosome biogenesis by controlling the delivery of proteins from the endosomal compartment to the melanosome (PubMed:29584722). Essential for systemic glucose homeostasis, mediates insulin-induced signals for endosome/actin remodeling in the course of GLUT4 translocation/glucose uptake activation (By similarity). Supports microtubule-based endosome-to-trans-Golgi network cargo transport, through association with SPAG9 and RABEPK (By similarity). Mediates EGFR trafficking to the nucleus (PubMed:17909029).</text>
</comment>
<comment type="function">
    <text evidence="19">(Microbial infection) Required for cell entry of coronaviruses SARS-CoV and SARS-CoV-2, as well as human coronavirus EMC (HCoV-EMC) by endocytosis.</text>
</comment>
<comment type="catalytic activity">
    <reaction evidence="20 26">
        <text>a 1,2-diacyl-sn-glycero-3-phospho-(1D-myo-inositol-3-phosphate) + ATP = a 1,2-diacyl-sn-glycero-3-phospho-(1D-myo-inositol-3,5-bisphosphate) + ADP + H(+)</text>
        <dbReference type="Rhea" id="RHEA:13609"/>
        <dbReference type="ChEBI" id="CHEBI:15378"/>
        <dbReference type="ChEBI" id="CHEBI:30616"/>
        <dbReference type="ChEBI" id="CHEBI:57923"/>
        <dbReference type="ChEBI" id="CHEBI:58088"/>
        <dbReference type="ChEBI" id="CHEBI:456216"/>
        <dbReference type="EC" id="2.7.1.150"/>
    </reaction>
    <physiologicalReaction direction="left-to-right" evidence="28">
        <dbReference type="Rhea" id="RHEA:13610"/>
    </physiologicalReaction>
</comment>
<comment type="catalytic activity">
    <reaction evidence="14">
        <text>a 1,2-diacyl-sn-glycero-3-phospho-(1D-myo-inositol) + ATP = a 1,2-diacyl-sn-glycero-3-phospho-(1D-myo-inositol-5-phosphate) + ADP + H(+)</text>
        <dbReference type="Rhea" id="RHEA:44680"/>
        <dbReference type="ChEBI" id="CHEBI:15378"/>
        <dbReference type="ChEBI" id="CHEBI:30616"/>
        <dbReference type="ChEBI" id="CHEBI:57795"/>
        <dbReference type="ChEBI" id="CHEBI:57880"/>
        <dbReference type="ChEBI" id="CHEBI:456216"/>
    </reaction>
    <physiologicalReaction direction="left-to-right" evidence="27">
        <dbReference type="Rhea" id="RHEA:44681"/>
    </physiologicalReaction>
</comment>
<comment type="catalytic activity">
    <reaction evidence="20">
        <text>L-seryl-[protein] + ATP = O-phospho-L-seryl-[protein] + ADP + H(+)</text>
        <dbReference type="Rhea" id="RHEA:17989"/>
        <dbReference type="Rhea" id="RHEA-COMP:9863"/>
        <dbReference type="Rhea" id="RHEA-COMP:11604"/>
        <dbReference type="ChEBI" id="CHEBI:15378"/>
        <dbReference type="ChEBI" id="CHEBI:29999"/>
        <dbReference type="ChEBI" id="CHEBI:30616"/>
        <dbReference type="ChEBI" id="CHEBI:83421"/>
        <dbReference type="ChEBI" id="CHEBI:456216"/>
        <dbReference type="EC" id="2.7.11.1"/>
    </reaction>
    <physiologicalReaction direction="left-to-right" evidence="20">
        <dbReference type="Rhea" id="RHEA:17990"/>
    </physiologicalReaction>
</comment>
<comment type="activity regulation">
    <text evidence="14 17 18 19">Inhibited by apilimod and YM201636.</text>
</comment>
<comment type="subunit">
    <text evidence="1 7 10 11 12 20">Component of the PI(3,5)P2 regulatory complex/PAS complex, at least composed of PIKFYVE, FIG4 and VAC14. VAC14 nucleates the assembly of the complex and serves as a scaffold by pentamerizing into a star-shaped structure, which can bind a single copy each of PIKFYVE and FIG4 and coordinates their activities (PubMed:17556371, PubMed:18950639, PubMed:33098764). Interacts (via chaperonin-like domain) with RABEPK; the interaction recruits RABEPK to the endosomal membrane (PubMed:14530284). Interacts with SPAG9 (By similarity). Interacts with EGFR (PubMed:17909029).</text>
</comment>
<comment type="interaction">
    <interactant intactId="EBI-6138650">
        <id>Q9Y2I7</id>
    </interactant>
    <interactant intactId="EBI-4290773">
        <id>Q92562</id>
        <label>FIG4</label>
    </interactant>
    <organismsDiffer>false</organismsDiffer>
    <experiments>3</experiments>
</comment>
<comment type="interaction">
    <interactant intactId="EBI-6138650">
        <id>Q9Y2I7</id>
    </interactant>
    <interactant intactId="EBI-2107455">
        <id>Q08AM6</id>
        <label>VAC14</label>
    </interactant>
    <organismsDiffer>false</organismsDiffer>
    <experiments>7</experiments>
</comment>
<comment type="subcellular location">
    <subcellularLocation>
        <location evidence="6 10">Endosome membrane</location>
        <topology evidence="1">Peripheral membrane protein</topology>
    </subcellularLocation>
    <subcellularLocation>
        <location evidence="18">Early endosome membrane</location>
        <topology>Peripheral membrane protein</topology>
    </subcellularLocation>
    <subcellularLocation>
        <location evidence="18">Cytoplasmic vesicle</location>
        <location evidence="18">Phagosome membrane</location>
        <topology evidence="25">Peripheral membrane protein</topology>
    </subcellularLocation>
    <subcellularLocation>
        <location evidence="6">Late endosome membrane</location>
        <topology evidence="1">Peripheral membrane protein</topology>
    </subcellularLocation>
    <text evidence="6">Mainly associated with membranes of the late endocytic pathway.</text>
</comment>
<comment type="alternative products">
    <event type="alternative splicing"/>
    <isoform>
        <id>Q9Y2I7-1</id>
        <name>1</name>
        <sequence type="displayed"/>
    </isoform>
    <isoform>
        <id>Q9Y2I7-2</id>
        <name>2</name>
        <sequence type="described" ref="VSP_040108 VSP_040110 VSP_040111"/>
    </isoform>
    <isoform>
        <id>Q9Y2I7-3</id>
        <name>3</name>
        <sequence type="described" ref="VSP_040109 VSP_040110 VSP_040111"/>
    </isoform>
    <isoform>
        <id>Q9Y2I7-4</id>
        <name>4</name>
        <sequence type="described" ref="VSP_040110 VSP_040111"/>
    </isoform>
</comment>
<comment type="domain">
    <text evidence="6">Interaction of FYVE-type domain with phosphatidylinositol 3-phosphate (PtdIns(3)P) is necessary for targeting to the membranes of the late endocytic pathway.</text>
</comment>
<comment type="PTM">
    <text evidence="13 20">Autophosphorylates which inhibits its own phosphatidylinositol 3-phosphate 5-kinase activity, stimulates FIG4 lipid phosphatase activity and down-regulates lipid product formation (PubMed:33098764). Dephosphorylated by FIG4 in the PI(3,5)P2 regulatory complex, at Ser-48, Ser-1669 and Ser-2053 (PubMed:33098764). Phosphorylated in response to insulin at Ser-318 in a protein kinase B (PKB)-dependent manner (PubMed:20513353).</text>
</comment>
<comment type="disease" evidence="9">
    <disease id="DI-01431">
        <name>Corneal dystrophy, fleck</name>
        <acronym>CFD</acronym>
        <description>A form of stromal corneal dystrophy characterized by numerous small white flecks scattered in all levels of the stroma, with configurations varying from semicircular to wreath-like, curvilinear, or punctate. Although CFD may occasionally cause mild photophobia, patients are typically asymptomatic and have normal vision.</description>
        <dbReference type="MIM" id="121850"/>
    </disease>
    <text>The disease is caused by variants affecting the gene represented in this entry.</text>
</comment>
<comment type="sequence caution" evidence="25">
    <conflict type="erroneous initiation">
        <sequence resource="EMBL-CDS" id="BAC03674"/>
    </conflict>
    <text>Truncated N-terminus.</text>
</comment>
<dbReference type="EC" id="2.7.1.150" evidence="10 20"/>
<dbReference type="EC" id="2.7.11.1" evidence="20"/>
<dbReference type="EMBL" id="AY457063">
    <property type="protein sequence ID" value="AAR19397.1"/>
    <property type="molecule type" value="mRNA"/>
</dbReference>
<dbReference type="EMBL" id="AC012362">
    <property type="protein sequence ID" value="AAY14870.1"/>
    <property type="molecule type" value="Genomic_DNA"/>
</dbReference>
<dbReference type="EMBL" id="AC016697">
    <property type="protein sequence ID" value="AAX93222.1"/>
    <property type="molecule type" value="Genomic_DNA"/>
</dbReference>
<dbReference type="EMBL" id="CH471063">
    <property type="protein sequence ID" value="EAW70444.1"/>
    <property type="molecule type" value="Genomic_DNA"/>
</dbReference>
<dbReference type="EMBL" id="CH471063">
    <property type="protein sequence ID" value="EAW70445.1"/>
    <property type="molecule type" value="Genomic_DNA"/>
</dbReference>
<dbReference type="EMBL" id="BC032389">
    <property type="protein sequence ID" value="AAH32389.1"/>
    <property type="molecule type" value="mRNA"/>
</dbReference>
<dbReference type="EMBL" id="BC125052">
    <property type="protein sequence ID" value="AAI25053.1"/>
    <property type="molecule type" value="mRNA"/>
</dbReference>
<dbReference type="EMBL" id="BC125053">
    <property type="protein sequence ID" value="AAI25054.1"/>
    <property type="molecule type" value="mRNA"/>
</dbReference>
<dbReference type="EMBL" id="AK091482">
    <property type="protein sequence ID" value="BAC03674.1"/>
    <property type="status" value="ALT_INIT"/>
    <property type="molecule type" value="mRNA"/>
</dbReference>
<dbReference type="EMBL" id="AB023198">
    <property type="protein sequence ID" value="BAA76825.1"/>
    <property type="molecule type" value="mRNA"/>
</dbReference>
<dbReference type="CCDS" id="CCDS2382.1">
    <molecule id="Q9Y2I7-1"/>
</dbReference>
<dbReference type="CCDS" id="CCDS33368.1">
    <molecule id="Q9Y2I7-2"/>
</dbReference>
<dbReference type="CCDS" id="CCDS54431.1">
    <molecule id="Q9Y2I7-4"/>
</dbReference>
<dbReference type="RefSeq" id="NP_001171471.1">
    <molecule id="Q9Y2I7-4"/>
    <property type="nucleotide sequence ID" value="NM_001178000.2"/>
</dbReference>
<dbReference type="RefSeq" id="NP_055855.2">
    <molecule id="Q9Y2I7-1"/>
    <property type="nucleotide sequence ID" value="NM_015040.4"/>
</dbReference>
<dbReference type="RefSeq" id="NP_689884.1">
    <molecule id="Q9Y2I7-2"/>
    <property type="nucleotide sequence ID" value="NM_152671.4"/>
</dbReference>
<dbReference type="RefSeq" id="XP_047299623.1">
    <molecule id="Q9Y2I7-1"/>
    <property type="nucleotide sequence ID" value="XM_047443667.1"/>
</dbReference>
<dbReference type="PDB" id="7K2V">
    <property type="method" value="EM"/>
    <property type="resolution" value="6.60 A"/>
    <property type="chains" value="P=1822-2085"/>
</dbReference>
<dbReference type="PDBsum" id="7K2V"/>
<dbReference type="EMDB" id="EMD-22647"/>
<dbReference type="SMR" id="Q9Y2I7"/>
<dbReference type="BioGRID" id="128336">
    <property type="interactions" value="59"/>
</dbReference>
<dbReference type="CORUM" id="Q9Y2I7"/>
<dbReference type="FunCoup" id="Q9Y2I7">
    <property type="interactions" value="2424"/>
</dbReference>
<dbReference type="IntAct" id="Q9Y2I7">
    <property type="interactions" value="14"/>
</dbReference>
<dbReference type="MINT" id="Q9Y2I7"/>
<dbReference type="STRING" id="9606.ENSP00000264380"/>
<dbReference type="BindingDB" id="Q9Y2I7"/>
<dbReference type="ChEMBL" id="CHEMBL1938222"/>
<dbReference type="DrugBank" id="DB05611">
    <property type="generic name" value="Apilimod"/>
</dbReference>
<dbReference type="GuidetoPHARMACOLOGY" id="2857"/>
<dbReference type="GlyCosmos" id="Q9Y2I7">
    <property type="glycosylation" value="4 sites, 1 glycan"/>
</dbReference>
<dbReference type="GlyGen" id="Q9Y2I7">
    <property type="glycosylation" value="4 sites, 1 O-linked glycan (4 sites)"/>
</dbReference>
<dbReference type="iPTMnet" id="Q9Y2I7"/>
<dbReference type="MetOSite" id="Q9Y2I7"/>
<dbReference type="PhosphoSitePlus" id="Q9Y2I7"/>
<dbReference type="SwissPalm" id="Q9Y2I7"/>
<dbReference type="BioMuta" id="PIKFYVE"/>
<dbReference type="DMDM" id="300669693"/>
<dbReference type="jPOST" id="Q9Y2I7"/>
<dbReference type="MassIVE" id="Q9Y2I7"/>
<dbReference type="PaxDb" id="9606-ENSP00000264380"/>
<dbReference type="PeptideAtlas" id="Q9Y2I7"/>
<dbReference type="ProteomicsDB" id="85801">
    <molecule id="Q9Y2I7-1"/>
</dbReference>
<dbReference type="ProteomicsDB" id="85802">
    <molecule id="Q9Y2I7-2"/>
</dbReference>
<dbReference type="ProteomicsDB" id="85803">
    <molecule id="Q9Y2I7-3"/>
</dbReference>
<dbReference type="ProteomicsDB" id="85804">
    <molecule id="Q9Y2I7-4"/>
</dbReference>
<dbReference type="Pumba" id="Q9Y2I7"/>
<dbReference type="ABCD" id="Q9Y2I7">
    <property type="antibodies" value="1 sequenced antibody"/>
</dbReference>
<dbReference type="Antibodypedia" id="34200">
    <property type="antibodies" value="376 antibodies from 34 providers"/>
</dbReference>
<dbReference type="DNASU" id="200576"/>
<dbReference type="Ensembl" id="ENST00000264380.9">
    <molecule id="Q9Y2I7-1"/>
    <property type="protein sequence ID" value="ENSP00000264380.4"/>
    <property type="gene ID" value="ENSG00000115020.17"/>
</dbReference>
<dbReference type="Ensembl" id="ENST00000308862.10">
    <molecule id="Q9Y2I7-3"/>
    <property type="protein sequence ID" value="ENSP00000308715.6"/>
    <property type="gene ID" value="ENSG00000115020.17"/>
</dbReference>
<dbReference type="Ensembl" id="ENST00000392202.7">
    <molecule id="Q9Y2I7-2"/>
    <property type="protein sequence ID" value="ENSP00000376038.3"/>
    <property type="gene ID" value="ENSG00000115020.17"/>
</dbReference>
<dbReference type="Ensembl" id="ENST00000407449.5">
    <molecule id="Q9Y2I7-4"/>
    <property type="protein sequence ID" value="ENSP00000384356.1"/>
    <property type="gene ID" value="ENSG00000115020.17"/>
</dbReference>
<dbReference type="GeneID" id="200576"/>
<dbReference type="KEGG" id="hsa:200576"/>
<dbReference type="MANE-Select" id="ENST00000264380.9">
    <property type="protein sequence ID" value="ENSP00000264380.4"/>
    <property type="RefSeq nucleotide sequence ID" value="NM_015040.4"/>
    <property type="RefSeq protein sequence ID" value="NP_055855.2"/>
</dbReference>
<dbReference type="UCSC" id="uc002vcv.4">
    <molecule id="Q9Y2I7-1"/>
    <property type="organism name" value="human"/>
</dbReference>
<dbReference type="AGR" id="HGNC:23785"/>
<dbReference type="CTD" id="200576"/>
<dbReference type="DisGeNET" id="200576"/>
<dbReference type="GeneCards" id="PIKFYVE"/>
<dbReference type="HGNC" id="HGNC:23785">
    <property type="gene designation" value="PIKFYVE"/>
</dbReference>
<dbReference type="HPA" id="ENSG00000115020">
    <property type="expression patterns" value="Low tissue specificity"/>
</dbReference>
<dbReference type="MalaCards" id="PIKFYVE"/>
<dbReference type="MIM" id="121850">
    <property type="type" value="phenotype"/>
</dbReference>
<dbReference type="MIM" id="609414">
    <property type="type" value="gene"/>
</dbReference>
<dbReference type="neXtProt" id="NX_Q9Y2I7"/>
<dbReference type="OpenTargets" id="ENSG00000115020"/>
<dbReference type="Orphanet" id="98970">
    <property type="disease" value="Fleck corneal dystrophy"/>
</dbReference>
<dbReference type="PharmGKB" id="PA165697116"/>
<dbReference type="VEuPathDB" id="HostDB:ENSG00000115020"/>
<dbReference type="eggNOG" id="KOG0230">
    <property type="taxonomic scope" value="Eukaryota"/>
</dbReference>
<dbReference type="GeneTree" id="ENSGT00940000156307"/>
<dbReference type="HOGENOM" id="CLU_000480_2_1_1"/>
<dbReference type="InParanoid" id="Q9Y2I7"/>
<dbReference type="OMA" id="QSVWNDT"/>
<dbReference type="OrthoDB" id="158357at2759"/>
<dbReference type="PAN-GO" id="Q9Y2I7">
    <property type="GO annotations" value="8 GO annotations based on evolutionary models"/>
</dbReference>
<dbReference type="PhylomeDB" id="Q9Y2I7"/>
<dbReference type="TreeFam" id="TF321717"/>
<dbReference type="BioCyc" id="MetaCyc:HS03825-MONOMER"/>
<dbReference type="BRENDA" id="2.7.1.150">
    <property type="organism ID" value="2681"/>
</dbReference>
<dbReference type="BRENDA" id="2.7.1.68">
    <property type="organism ID" value="2681"/>
</dbReference>
<dbReference type="PathwayCommons" id="Q9Y2I7"/>
<dbReference type="Reactome" id="R-HSA-1660514">
    <property type="pathway name" value="Synthesis of PIPs at the Golgi membrane"/>
</dbReference>
<dbReference type="Reactome" id="R-HSA-1660516">
    <property type="pathway name" value="Synthesis of PIPs at the early endosome membrane"/>
</dbReference>
<dbReference type="Reactome" id="R-HSA-1660517">
    <property type="pathway name" value="Synthesis of PIPs at the late endosome membrane"/>
</dbReference>
<dbReference type="SignaLink" id="Q9Y2I7"/>
<dbReference type="SIGNOR" id="Q9Y2I7"/>
<dbReference type="BioGRID-ORCS" id="200576">
    <property type="hits" value="12 hits in 1158 CRISPR screens"/>
</dbReference>
<dbReference type="ChiTaRS" id="PIKFYVE">
    <property type="organism name" value="human"/>
</dbReference>
<dbReference type="GeneWiki" id="PIKFYVE"/>
<dbReference type="GenomeRNAi" id="200576"/>
<dbReference type="Pharos" id="Q9Y2I7">
    <property type="development level" value="Tchem"/>
</dbReference>
<dbReference type="PRO" id="PR:Q9Y2I7"/>
<dbReference type="Proteomes" id="UP000005640">
    <property type="component" value="Chromosome 2"/>
</dbReference>
<dbReference type="RNAct" id="Q9Y2I7">
    <property type="molecule type" value="protein"/>
</dbReference>
<dbReference type="Bgee" id="ENSG00000115020">
    <property type="expression patterns" value="Expressed in secondary oocyte and 203 other cell types or tissues"/>
</dbReference>
<dbReference type="ExpressionAtlas" id="Q9Y2I7">
    <property type="expression patterns" value="baseline and differential"/>
</dbReference>
<dbReference type="GO" id="GO:0031410">
    <property type="term" value="C:cytoplasmic vesicle"/>
    <property type="evidence" value="ECO:0000318"/>
    <property type="project" value="GO_Central"/>
</dbReference>
<dbReference type="GO" id="GO:0005829">
    <property type="term" value="C:cytosol"/>
    <property type="evidence" value="ECO:0007669"/>
    <property type="project" value="GOC"/>
</dbReference>
<dbReference type="GO" id="GO:0031901">
    <property type="term" value="C:early endosome membrane"/>
    <property type="evidence" value="ECO:0000314"/>
    <property type="project" value="UniProtKB"/>
</dbReference>
<dbReference type="GO" id="GO:0010008">
    <property type="term" value="C:endosome membrane"/>
    <property type="evidence" value="ECO:0000314"/>
    <property type="project" value="UniProtKB"/>
</dbReference>
<dbReference type="GO" id="GO:0000139">
    <property type="term" value="C:Golgi membrane"/>
    <property type="evidence" value="ECO:0000304"/>
    <property type="project" value="Reactome"/>
</dbReference>
<dbReference type="GO" id="GO:0031902">
    <property type="term" value="C:late endosome membrane"/>
    <property type="evidence" value="ECO:0000304"/>
    <property type="project" value="Reactome"/>
</dbReference>
<dbReference type="GO" id="GO:0045121">
    <property type="term" value="C:membrane raft"/>
    <property type="evidence" value="ECO:0000314"/>
    <property type="project" value="HGNC-UCL"/>
</dbReference>
<dbReference type="GO" id="GO:0030670">
    <property type="term" value="C:phagocytic vesicle membrane"/>
    <property type="evidence" value="ECO:0000314"/>
    <property type="project" value="UniProtKB"/>
</dbReference>
<dbReference type="GO" id="GO:0012506">
    <property type="term" value="C:vesicle membrane"/>
    <property type="evidence" value="ECO:0000318"/>
    <property type="project" value="GO_Central"/>
</dbReference>
<dbReference type="GO" id="GO:0000285">
    <property type="term" value="F:1-phosphatidylinositol-3-phosphate 5-kinase activity"/>
    <property type="evidence" value="ECO:0000314"/>
    <property type="project" value="UniProtKB"/>
</dbReference>
<dbReference type="GO" id="GO:0016308">
    <property type="term" value="F:1-phosphatidylinositol-4-phosphate 5-kinase activity"/>
    <property type="evidence" value="ECO:0000304"/>
    <property type="project" value="HGNC-UCL"/>
</dbReference>
<dbReference type="GO" id="GO:0052810">
    <property type="term" value="F:1-phosphatidylinositol-5-kinase activity"/>
    <property type="evidence" value="ECO:0000314"/>
    <property type="project" value="UniProtKB"/>
</dbReference>
<dbReference type="GO" id="GO:0005524">
    <property type="term" value="F:ATP binding"/>
    <property type="evidence" value="ECO:0007669"/>
    <property type="project" value="UniProtKB-KW"/>
</dbReference>
<dbReference type="GO" id="GO:0043813">
    <property type="term" value="F:phosphatidylinositol-3,5-bisphosphate 5-phosphatase activity"/>
    <property type="evidence" value="ECO:0000304"/>
    <property type="project" value="Reactome"/>
</dbReference>
<dbReference type="GO" id="GO:0106310">
    <property type="term" value="F:protein serine kinase activity"/>
    <property type="evidence" value="ECO:0007669"/>
    <property type="project" value="RHEA"/>
</dbReference>
<dbReference type="GO" id="GO:0004674">
    <property type="term" value="F:protein serine/threonine kinase activity"/>
    <property type="evidence" value="ECO:0000250"/>
    <property type="project" value="UniProtKB"/>
</dbReference>
<dbReference type="GO" id="GO:0008270">
    <property type="term" value="F:zinc ion binding"/>
    <property type="evidence" value="ECO:0007669"/>
    <property type="project" value="UniProtKB-KW"/>
</dbReference>
<dbReference type="GO" id="GO:1903100">
    <property type="term" value="P:1-phosphatidyl-1D-myo-inositol 3,5-bisphosphate metabolic process"/>
    <property type="evidence" value="ECO:0000250"/>
    <property type="project" value="UniProtKB"/>
</dbReference>
<dbReference type="GO" id="GO:0019886">
    <property type="term" value="P:antigen processing and presentation of exogenous peptide antigen via MHC class II"/>
    <property type="evidence" value="ECO:0000314"/>
    <property type="project" value="UniProtKB"/>
</dbReference>
<dbReference type="GO" id="GO:0035556">
    <property type="term" value="P:intracellular signal transduction"/>
    <property type="evidence" value="ECO:0007669"/>
    <property type="project" value="InterPro"/>
</dbReference>
<dbReference type="GO" id="GO:0032438">
    <property type="term" value="P:melanosome organization"/>
    <property type="evidence" value="ECO:0000314"/>
    <property type="project" value="UniProtKB"/>
</dbReference>
<dbReference type="GO" id="GO:0030593">
    <property type="term" value="P:neutrophil chemotaxis"/>
    <property type="evidence" value="ECO:0000314"/>
    <property type="project" value="UniProtKB"/>
</dbReference>
<dbReference type="GO" id="GO:0036289">
    <property type="term" value="P:peptidyl-serine autophosphorylation"/>
    <property type="evidence" value="ECO:0000250"/>
    <property type="project" value="UniProtKB"/>
</dbReference>
<dbReference type="GO" id="GO:0090382">
    <property type="term" value="P:phagosome maturation"/>
    <property type="evidence" value="ECO:0000314"/>
    <property type="project" value="UniProtKB"/>
</dbReference>
<dbReference type="GO" id="GO:0090385">
    <property type="term" value="P:phagosome-lysosome fusion"/>
    <property type="evidence" value="ECO:0000314"/>
    <property type="project" value="UniProtKB"/>
</dbReference>
<dbReference type="GO" id="GO:1904562">
    <property type="term" value="P:phosphatidylinositol 5-phosphate metabolic process"/>
    <property type="evidence" value="ECO:0000250"/>
    <property type="project" value="UniProtKB"/>
</dbReference>
<dbReference type="GO" id="GO:0006661">
    <property type="term" value="P:phosphatidylinositol biosynthetic process"/>
    <property type="evidence" value="ECO:0000304"/>
    <property type="project" value="Reactome"/>
</dbReference>
<dbReference type="GO" id="GO:0034504">
    <property type="term" value="P:protein localization to nucleus"/>
    <property type="evidence" value="ECO:0000315"/>
    <property type="project" value="UniProtKB"/>
</dbReference>
<dbReference type="GO" id="GO:0006612">
    <property type="term" value="P:protein targeting to membrane"/>
    <property type="evidence" value="ECO:0000250"/>
    <property type="project" value="UniProtKB"/>
</dbReference>
<dbReference type="GO" id="GO:0019065">
    <property type="term" value="P:receptor-mediated endocytosis of virus by host cell"/>
    <property type="evidence" value="ECO:0000314"/>
    <property type="project" value="UniProtKB"/>
</dbReference>
<dbReference type="GO" id="GO:2000785">
    <property type="term" value="P:regulation of autophagosome assembly"/>
    <property type="evidence" value="ECO:0000315"/>
    <property type="project" value="ParkinsonsUK-UCL"/>
</dbReference>
<dbReference type="GO" id="GO:1903426">
    <property type="term" value="P:regulation of reactive oxygen species biosynthetic process"/>
    <property type="evidence" value="ECO:0000314"/>
    <property type="project" value="UniProtKB"/>
</dbReference>
<dbReference type="GO" id="GO:0042147">
    <property type="term" value="P:retrograde transport, endosome to Golgi"/>
    <property type="evidence" value="ECO:0000315"/>
    <property type="project" value="UniProtKB"/>
</dbReference>
<dbReference type="CDD" id="cd04448">
    <property type="entry name" value="DEP_PIKfyve"/>
    <property type="match status" value="1"/>
</dbReference>
<dbReference type="CDD" id="cd03334">
    <property type="entry name" value="Fab1_TCP"/>
    <property type="match status" value="1"/>
</dbReference>
<dbReference type="CDD" id="cd15725">
    <property type="entry name" value="FYVE_PIKfyve_Fab1"/>
    <property type="match status" value="1"/>
</dbReference>
<dbReference type="CDD" id="cd17300">
    <property type="entry name" value="PIPKc_PIKfyve"/>
    <property type="match status" value="1"/>
</dbReference>
<dbReference type="FunFam" id="3.30.810.10:FF:000001">
    <property type="entry name" value="1-phosphatidylinositol 3-phosphate 5-kinase FAB1"/>
    <property type="match status" value="1"/>
</dbReference>
<dbReference type="FunFam" id="1.10.10.10:FF:000206">
    <property type="entry name" value="1-phosphatidylinositol 3-phosphate 5-kinase isoform X1"/>
    <property type="match status" value="1"/>
</dbReference>
<dbReference type="FunFam" id="3.30.40.10:FF:000057">
    <property type="entry name" value="1-phosphatidylinositol 3-phosphate 5-kinase isoform X1"/>
    <property type="match status" value="1"/>
</dbReference>
<dbReference type="FunFam" id="3.30.800.10:FF:000004">
    <property type="entry name" value="1-phosphatidylinositol 3-phosphate 5-kinase isoform X1"/>
    <property type="match status" value="1"/>
</dbReference>
<dbReference type="FunFam" id="3.50.7.10:FF:000007">
    <property type="entry name" value="1-phosphatidylinositol 3-phosphate 5-kinase isoform X1"/>
    <property type="match status" value="1"/>
</dbReference>
<dbReference type="Gene3D" id="3.30.810.10">
    <property type="entry name" value="2-Layer Sandwich"/>
    <property type="match status" value="1"/>
</dbReference>
<dbReference type="Gene3D" id="3.50.7.10">
    <property type="entry name" value="GroEL"/>
    <property type="match status" value="1"/>
</dbReference>
<dbReference type="Gene3D" id="3.30.800.10">
    <property type="entry name" value="Phosphatidylinositol Phosphate Kinase II Beta"/>
    <property type="match status" value="1"/>
</dbReference>
<dbReference type="Gene3D" id="1.10.10.10">
    <property type="entry name" value="Winged helix-like DNA-binding domain superfamily/Winged helix DNA-binding domain"/>
    <property type="match status" value="1"/>
</dbReference>
<dbReference type="Gene3D" id="3.30.40.10">
    <property type="entry name" value="Zinc/RING finger domain, C3HC4 (zinc finger)"/>
    <property type="match status" value="1"/>
</dbReference>
<dbReference type="InterPro" id="IPR002423">
    <property type="entry name" value="Cpn60/GroEL/TCP-1"/>
</dbReference>
<dbReference type="InterPro" id="IPR000591">
    <property type="entry name" value="DEP_dom"/>
</dbReference>
<dbReference type="InterPro" id="IPR027409">
    <property type="entry name" value="GroEL-like_apical_dom_sf"/>
</dbReference>
<dbReference type="InterPro" id="IPR043548">
    <property type="entry name" value="PIKfyve"/>
</dbReference>
<dbReference type="InterPro" id="IPR037378">
    <property type="entry name" value="PIKfyve_DEP"/>
</dbReference>
<dbReference type="InterPro" id="IPR044769">
    <property type="entry name" value="PIKfyve_PIPKc"/>
</dbReference>
<dbReference type="InterPro" id="IPR027483">
    <property type="entry name" value="PInositol-4-P-4/5-kinase_C_sf"/>
</dbReference>
<dbReference type="InterPro" id="IPR002498">
    <property type="entry name" value="PInositol-4-P-4/5-kinase_core"/>
</dbReference>
<dbReference type="InterPro" id="IPR027484">
    <property type="entry name" value="PInositol-4-P-5-kinase_N"/>
</dbReference>
<dbReference type="InterPro" id="IPR027410">
    <property type="entry name" value="TCP-1-like_intermed_sf"/>
</dbReference>
<dbReference type="InterPro" id="IPR036388">
    <property type="entry name" value="WH-like_DNA-bd_sf"/>
</dbReference>
<dbReference type="InterPro" id="IPR036390">
    <property type="entry name" value="WH_DNA-bd_sf"/>
</dbReference>
<dbReference type="InterPro" id="IPR000306">
    <property type="entry name" value="Znf_FYVE"/>
</dbReference>
<dbReference type="InterPro" id="IPR017455">
    <property type="entry name" value="Znf_FYVE-rel"/>
</dbReference>
<dbReference type="InterPro" id="IPR011011">
    <property type="entry name" value="Znf_FYVE_PHD"/>
</dbReference>
<dbReference type="InterPro" id="IPR013083">
    <property type="entry name" value="Znf_RING/FYVE/PHD"/>
</dbReference>
<dbReference type="PANTHER" id="PTHR46715">
    <property type="entry name" value="1-PHOSPHATIDYLINOSITOL 3-PHOSPHATE 5-KINASE"/>
    <property type="match status" value="1"/>
</dbReference>
<dbReference type="PANTHER" id="PTHR46715:SF1">
    <property type="entry name" value="1-PHOSPHATIDYLINOSITOL 3-PHOSPHATE 5-KINASE"/>
    <property type="match status" value="1"/>
</dbReference>
<dbReference type="Pfam" id="PF00118">
    <property type="entry name" value="Cpn60_TCP1"/>
    <property type="match status" value="1"/>
</dbReference>
<dbReference type="Pfam" id="PF00610">
    <property type="entry name" value="DEP"/>
    <property type="match status" value="1"/>
</dbReference>
<dbReference type="Pfam" id="PF01363">
    <property type="entry name" value="FYVE"/>
    <property type="match status" value="1"/>
</dbReference>
<dbReference type="Pfam" id="PF01504">
    <property type="entry name" value="PIP5K"/>
    <property type="match status" value="2"/>
</dbReference>
<dbReference type="SMART" id="SM00049">
    <property type="entry name" value="DEP"/>
    <property type="match status" value="1"/>
</dbReference>
<dbReference type="SMART" id="SM00064">
    <property type="entry name" value="FYVE"/>
    <property type="match status" value="1"/>
</dbReference>
<dbReference type="SMART" id="SM00330">
    <property type="entry name" value="PIPKc"/>
    <property type="match status" value="1"/>
</dbReference>
<dbReference type="SUPFAM" id="SSF57903">
    <property type="entry name" value="FYVE/PHD zinc finger"/>
    <property type="match status" value="1"/>
</dbReference>
<dbReference type="SUPFAM" id="SSF52029">
    <property type="entry name" value="GroEL apical domain-like"/>
    <property type="match status" value="1"/>
</dbReference>
<dbReference type="SUPFAM" id="SSF54849">
    <property type="entry name" value="GroEL-intermediate domain like"/>
    <property type="match status" value="1"/>
</dbReference>
<dbReference type="SUPFAM" id="SSF56104">
    <property type="entry name" value="SAICAR synthase-like"/>
    <property type="match status" value="1"/>
</dbReference>
<dbReference type="SUPFAM" id="SSF46785">
    <property type="entry name" value="Winged helix' DNA-binding domain"/>
    <property type="match status" value="1"/>
</dbReference>
<dbReference type="PROSITE" id="PS50186">
    <property type="entry name" value="DEP"/>
    <property type="match status" value="1"/>
</dbReference>
<dbReference type="PROSITE" id="PS51455">
    <property type="entry name" value="PIPK"/>
    <property type="match status" value="1"/>
</dbReference>
<dbReference type="PROSITE" id="PS50178">
    <property type="entry name" value="ZF_FYVE"/>
    <property type="match status" value="1"/>
</dbReference>
<proteinExistence type="evidence at protein level"/>
<reference key="1">
    <citation type="submission" date="2003-11" db="EMBL/GenBank/DDBJ databases">
        <title>Human PIKfyve, a PI3P 5-kinase that regulates endocytic trafficking.</title>
        <authorList>
            <person name="Cabezas A."/>
            <person name="Pattni K."/>
            <person name="Stenmark H."/>
        </authorList>
    </citation>
    <scope>NUCLEOTIDE SEQUENCE [MRNA] (ISOFORM 1)</scope>
    <scope>VARIANTS ASN-696; SER-932; LEU-995; SER-998 AND LYS-1183</scope>
    <source>
        <tissue>Brain</tissue>
    </source>
</reference>
<reference key="2">
    <citation type="journal article" date="2005" name="Nature">
        <title>Generation and annotation of the DNA sequences of human chromosomes 2 and 4.</title>
        <authorList>
            <person name="Hillier L.W."/>
            <person name="Graves T.A."/>
            <person name="Fulton R.S."/>
            <person name="Fulton L.A."/>
            <person name="Pepin K.H."/>
            <person name="Minx P."/>
            <person name="Wagner-McPherson C."/>
            <person name="Layman D."/>
            <person name="Wylie K."/>
            <person name="Sekhon M."/>
            <person name="Becker M.C."/>
            <person name="Fewell G.A."/>
            <person name="Delehaunty K.D."/>
            <person name="Miner T.L."/>
            <person name="Nash W.E."/>
            <person name="Kremitzki C."/>
            <person name="Oddy L."/>
            <person name="Du H."/>
            <person name="Sun H."/>
            <person name="Bradshaw-Cordum H."/>
            <person name="Ali J."/>
            <person name="Carter J."/>
            <person name="Cordes M."/>
            <person name="Harris A."/>
            <person name="Isak A."/>
            <person name="van Brunt A."/>
            <person name="Nguyen C."/>
            <person name="Du F."/>
            <person name="Courtney L."/>
            <person name="Kalicki J."/>
            <person name="Ozersky P."/>
            <person name="Abbott S."/>
            <person name="Armstrong J."/>
            <person name="Belter E.A."/>
            <person name="Caruso L."/>
            <person name="Cedroni M."/>
            <person name="Cotton M."/>
            <person name="Davidson T."/>
            <person name="Desai A."/>
            <person name="Elliott G."/>
            <person name="Erb T."/>
            <person name="Fronick C."/>
            <person name="Gaige T."/>
            <person name="Haakenson W."/>
            <person name="Haglund K."/>
            <person name="Holmes A."/>
            <person name="Harkins R."/>
            <person name="Kim K."/>
            <person name="Kruchowski S.S."/>
            <person name="Strong C.M."/>
            <person name="Grewal N."/>
            <person name="Goyea E."/>
            <person name="Hou S."/>
            <person name="Levy A."/>
            <person name="Martinka S."/>
            <person name="Mead K."/>
            <person name="McLellan M.D."/>
            <person name="Meyer R."/>
            <person name="Randall-Maher J."/>
            <person name="Tomlinson C."/>
            <person name="Dauphin-Kohlberg S."/>
            <person name="Kozlowicz-Reilly A."/>
            <person name="Shah N."/>
            <person name="Swearengen-Shahid S."/>
            <person name="Snider J."/>
            <person name="Strong J.T."/>
            <person name="Thompson J."/>
            <person name="Yoakum M."/>
            <person name="Leonard S."/>
            <person name="Pearman C."/>
            <person name="Trani L."/>
            <person name="Radionenko M."/>
            <person name="Waligorski J.E."/>
            <person name="Wang C."/>
            <person name="Rock S.M."/>
            <person name="Tin-Wollam A.-M."/>
            <person name="Maupin R."/>
            <person name="Latreille P."/>
            <person name="Wendl M.C."/>
            <person name="Yang S.-P."/>
            <person name="Pohl C."/>
            <person name="Wallis J.W."/>
            <person name="Spieth J."/>
            <person name="Bieri T.A."/>
            <person name="Berkowicz N."/>
            <person name="Nelson J.O."/>
            <person name="Osborne J."/>
            <person name="Ding L."/>
            <person name="Meyer R."/>
            <person name="Sabo A."/>
            <person name="Shotland Y."/>
            <person name="Sinha P."/>
            <person name="Wohldmann P.E."/>
            <person name="Cook L.L."/>
            <person name="Hickenbotham M.T."/>
            <person name="Eldred J."/>
            <person name="Williams D."/>
            <person name="Jones T.A."/>
            <person name="She X."/>
            <person name="Ciccarelli F.D."/>
            <person name="Izaurralde E."/>
            <person name="Taylor J."/>
            <person name="Schmutz J."/>
            <person name="Myers R.M."/>
            <person name="Cox D.R."/>
            <person name="Huang X."/>
            <person name="McPherson J.D."/>
            <person name="Mardis E.R."/>
            <person name="Clifton S.W."/>
            <person name="Warren W.C."/>
            <person name="Chinwalla A.T."/>
            <person name="Eddy S.R."/>
            <person name="Marra M.A."/>
            <person name="Ovcharenko I."/>
            <person name="Furey T.S."/>
            <person name="Miller W."/>
            <person name="Eichler E.E."/>
            <person name="Bork P."/>
            <person name="Suyama M."/>
            <person name="Torrents D."/>
            <person name="Waterston R.H."/>
            <person name="Wilson R.K."/>
        </authorList>
    </citation>
    <scope>NUCLEOTIDE SEQUENCE [LARGE SCALE GENOMIC DNA]</scope>
</reference>
<reference key="3">
    <citation type="submission" date="2005-07" db="EMBL/GenBank/DDBJ databases">
        <authorList>
            <person name="Mural R.J."/>
            <person name="Istrail S."/>
            <person name="Sutton G.G."/>
            <person name="Florea L."/>
            <person name="Halpern A.L."/>
            <person name="Mobarry C.M."/>
            <person name="Lippert R."/>
            <person name="Walenz B."/>
            <person name="Shatkay H."/>
            <person name="Dew I."/>
            <person name="Miller J.R."/>
            <person name="Flanigan M.J."/>
            <person name="Edwards N.J."/>
            <person name="Bolanos R."/>
            <person name="Fasulo D."/>
            <person name="Halldorsson B.V."/>
            <person name="Hannenhalli S."/>
            <person name="Turner R."/>
            <person name="Yooseph S."/>
            <person name="Lu F."/>
            <person name="Nusskern D.R."/>
            <person name="Shue B.C."/>
            <person name="Zheng X.H."/>
            <person name="Zhong F."/>
            <person name="Delcher A.L."/>
            <person name="Huson D.H."/>
            <person name="Kravitz S.A."/>
            <person name="Mouchard L."/>
            <person name="Reinert K."/>
            <person name="Remington K.A."/>
            <person name="Clark A.G."/>
            <person name="Waterman M.S."/>
            <person name="Eichler E.E."/>
            <person name="Adams M.D."/>
            <person name="Hunkapiller M.W."/>
            <person name="Myers E.W."/>
            <person name="Venter J.C."/>
        </authorList>
    </citation>
    <scope>NUCLEOTIDE SEQUENCE [LARGE SCALE GENOMIC DNA]</scope>
    <scope>VARIANTS ASN-696; SER-932; LEU-995; SER-998 AND LYS-1183</scope>
</reference>
<reference key="4">
    <citation type="journal article" date="2004" name="Genome Res.">
        <title>The status, quality, and expansion of the NIH full-length cDNA project: the Mammalian Gene Collection (MGC).</title>
        <authorList>
            <consortium name="The MGC Project Team"/>
        </authorList>
    </citation>
    <scope>NUCLEOTIDE SEQUENCE [LARGE SCALE MRNA] (ISOFORMS 2; 3 AND 4)</scope>
    <source>
        <tissue>Brain</tissue>
    </source>
</reference>
<reference key="5">
    <citation type="journal article" date="2004" name="Nat. Genet.">
        <title>Complete sequencing and characterization of 21,243 full-length human cDNAs.</title>
        <authorList>
            <person name="Ota T."/>
            <person name="Suzuki Y."/>
            <person name="Nishikawa T."/>
            <person name="Otsuki T."/>
            <person name="Sugiyama T."/>
            <person name="Irie R."/>
            <person name="Wakamatsu A."/>
            <person name="Hayashi K."/>
            <person name="Sato H."/>
            <person name="Nagai K."/>
            <person name="Kimura K."/>
            <person name="Makita H."/>
            <person name="Sekine M."/>
            <person name="Obayashi M."/>
            <person name="Nishi T."/>
            <person name="Shibahara T."/>
            <person name="Tanaka T."/>
            <person name="Ishii S."/>
            <person name="Yamamoto J."/>
            <person name="Saito K."/>
            <person name="Kawai Y."/>
            <person name="Isono Y."/>
            <person name="Nakamura Y."/>
            <person name="Nagahari K."/>
            <person name="Murakami K."/>
            <person name="Yasuda T."/>
            <person name="Iwayanagi T."/>
            <person name="Wagatsuma M."/>
            <person name="Shiratori A."/>
            <person name="Sudo H."/>
            <person name="Hosoiri T."/>
            <person name="Kaku Y."/>
            <person name="Kodaira H."/>
            <person name="Kondo H."/>
            <person name="Sugawara M."/>
            <person name="Takahashi M."/>
            <person name="Kanda K."/>
            <person name="Yokoi T."/>
            <person name="Furuya T."/>
            <person name="Kikkawa E."/>
            <person name="Omura Y."/>
            <person name="Abe K."/>
            <person name="Kamihara K."/>
            <person name="Katsuta N."/>
            <person name="Sato K."/>
            <person name="Tanikawa M."/>
            <person name="Yamazaki M."/>
            <person name="Ninomiya K."/>
            <person name="Ishibashi T."/>
            <person name="Yamashita H."/>
            <person name="Murakawa K."/>
            <person name="Fujimori K."/>
            <person name="Tanai H."/>
            <person name="Kimata M."/>
            <person name="Watanabe M."/>
            <person name="Hiraoka S."/>
            <person name="Chiba Y."/>
            <person name="Ishida S."/>
            <person name="Ono Y."/>
            <person name="Takiguchi S."/>
            <person name="Watanabe S."/>
            <person name="Yosida M."/>
            <person name="Hotuta T."/>
            <person name="Kusano J."/>
            <person name="Kanehori K."/>
            <person name="Takahashi-Fujii A."/>
            <person name="Hara H."/>
            <person name="Tanase T.-O."/>
            <person name="Nomura Y."/>
            <person name="Togiya S."/>
            <person name="Komai F."/>
            <person name="Hara R."/>
            <person name="Takeuchi K."/>
            <person name="Arita M."/>
            <person name="Imose N."/>
            <person name="Musashino K."/>
            <person name="Yuuki H."/>
            <person name="Oshima A."/>
            <person name="Sasaki N."/>
            <person name="Aotsuka S."/>
            <person name="Yoshikawa Y."/>
            <person name="Matsunawa H."/>
            <person name="Ichihara T."/>
            <person name="Shiohata N."/>
            <person name="Sano S."/>
            <person name="Moriya S."/>
            <person name="Momiyama H."/>
            <person name="Satoh N."/>
            <person name="Takami S."/>
            <person name="Terashima Y."/>
            <person name="Suzuki O."/>
            <person name="Nakagawa S."/>
            <person name="Senoh A."/>
            <person name="Mizoguchi H."/>
            <person name="Goto Y."/>
            <person name="Shimizu F."/>
            <person name="Wakebe H."/>
            <person name="Hishigaki H."/>
            <person name="Watanabe T."/>
            <person name="Sugiyama A."/>
            <person name="Takemoto M."/>
            <person name="Kawakami B."/>
            <person name="Yamazaki M."/>
            <person name="Watanabe K."/>
            <person name="Kumagai A."/>
            <person name="Itakura S."/>
            <person name="Fukuzumi Y."/>
            <person name="Fujimori Y."/>
            <person name="Komiyama M."/>
            <person name="Tashiro H."/>
            <person name="Tanigami A."/>
            <person name="Fujiwara T."/>
            <person name="Ono T."/>
            <person name="Yamada K."/>
            <person name="Fujii Y."/>
            <person name="Ozaki K."/>
            <person name="Hirao M."/>
            <person name="Ohmori Y."/>
            <person name="Kawabata A."/>
            <person name="Hikiji T."/>
            <person name="Kobatake N."/>
            <person name="Inagaki H."/>
            <person name="Ikema Y."/>
            <person name="Okamoto S."/>
            <person name="Okitani R."/>
            <person name="Kawakami T."/>
            <person name="Noguchi S."/>
            <person name="Itoh T."/>
            <person name="Shigeta K."/>
            <person name="Senba T."/>
            <person name="Matsumura K."/>
            <person name="Nakajima Y."/>
            <person name="Mizuno T."/>
            <person name="Morinaga M."/>
            <person name="Sasaki M."/>
            <person name="Togashi T."/>
            <person name="Oyama M."/>
            <person name="Hata H."/>
            <person name="Watanabe M."/>
            <person name="Komatsu T."/>
            <person name="Mizushima-Sugano J."/>
            <person name="Satoh T."/>
            <person name="Shirai Y."/>
            <person name="Takahashi Y."/>
            <person name="Nakagawa K."/>
            <person name="Okumura K."/>
            <person name="Nagase T."/>
            <person name="Nomura N."/>
            <person name="Kikuchi H."/>
            <person name="Masuho Y."/>
            <person name="Yamashita R."/>
            <person name="Nakai K."/>
            <person name="Yada T."/>
            <person name="Nakamura Y."/>
            <person name="Ohara O."/>
            <person name="Isogai T."/>
            <person name="Sugano S."/>
        </authorList>
    </citation>
    <scope>NUCLEOTIDE SEQUENCE [LARGE SCALE MRNA] OF 1037-2098 (ISOFORM 1)</scope>
    <scope>VARIANT LYS-1183</scope>
    <source>
        <tissue>Brain</tissue>
    </source>
</reference>
<reference key="6">
    <citation type="journal article" date="1999" name="DNA Res.">
        <title>Prediction of the coding sequences of unidentified human genes. XIII. The complete sequences of 100 new cDNA clones from brain which code for large proteins in vitro.</title>
        <authorList>
            <person name="Nagase T."/>
            <person name="Ishikawa K."/>
            <person name="Suyama M."/>
            <person name="Kikuno R."/>
            <person name="Hirosawa M."/>
            <person name="Miyajima N."/>
            <person name="Tanaka A."/>
            <person name="Kotani H."/>
            <person name="Nomura N."/>
            <person name="Ohara O."/>
        </authorList>
    </citation>
    <scope>NUCLEOTIDE SEQUENCE [LARGE SCALE MRNA] OF 1521-2098 (ISOFORM 1)</scope>
    <source>
        <tissue>Brain</tissue>
    </source>
</reference>
<reference key="7">
    <citation type="journal article" date="2002" name="J. Biol. Chem.">
        <title>Phosphatidylinositol 3-phosphate-interacting domains in PIKfyve. Binding specificity and role in PIKfyve endomembrane localization.</title>
        <authorList>
            <person name="Sbrissa D."/>
            <person name="Ikonomov O.C."/>
            <person name="Shisheva A."/>
        </authorList>
    </citation>
    <scope>SUBCELLULAR LOCATION</scope>
</reference>
<reference key="8">
    <citation type="journal article" date="2003" name="J. Biol. Chem.">
        <title>Active PIKfyve associates with and promotes the membrane attachment of the late endosome-to-trans-Golgi network transport factor Rab9 effector p40.</title>
        <authorList>
            <person name="Ikonomov O.C."/>
            <person name="Sbrissa D."/>
            <person name="Mlak K."/>
            <person name="Deeb R."/>
            <person name="Fligger J."/>
            <person name="Soans A."/>
            <person name="Finley R.L. Jr."/>
            <person name="Shisheva A."/>
        </authorList>
    </citation>
    <scope>INTERACTION WITH RABEPK</scope>
</reference>
<reference key="9">
    <citation type="journal article" date="2004" name="Anal. Chem.">
        <title>Robust phosphoproteomic profiling of tyrosine phosphorylation sites from human T cells using immobilized metal affinity chromatography and tandem mass spectrometry.</title>
        <authorList>
            <person name="Brill L.M."/>
            <person name="Salomon A.R."/>
            <person name="Ficarro S.B."/>
            <person name="Mukherji M."/>
            <person name="Stettler-Gill M."/>
            <person name="Peters E.C."/>
        </authorList>
    </citation>
    <scope>IDENTIFICATION BY MASS SPECTROMETRY [LARGE SCALE ANALYSIS]</scope>
    <source>
        <tissue>Leukemic T-cell</tissue>
    </source>
</reference>
<reference key="10">
    <citation type="journal article" date="2005" name="Nat. Biotechnol.">
        <title>Immunoaffinity profiling of tyrosine phosphorylation in cancer cells.</title>
        <authorList>
            <person name="Rush J."/>
            <person name="Moritz A."/>
            <person name="Lee K.A."/>
            <person name="Guo A."/>
            <person name="Goss V.L."/>
            <person name="Spek E.J."/>
            <person name="Zhang H."/>
            <person name="Zha X.-M."/>
            <person name="Polakiewicz R.D."/>
            <person name="Comb M.J."/>
        </authorList>
    </citation>
    <scope>IDENTIFICATION BY MASS SPECTROMETRY [LARGE SCALE ANALYSIS]</scope>
</reference>
<reference key="11">
    <citation type="journal article" date="2007" name="Cancer Res.">
        <title>The phosphoinositide kinase PIKfyve mediates epidermal growth factor receptor trafficking to the nucleus.</title>
        <authorList>
            <person name="Kim J."/>
            <person name="Jahng W.J."/>
            <person name="Di Vizio D."/>
            <person name="Lee J.S."/>
            <person name="Jhaveri R."/>
            <person name="Rubin M.A."/>
            <person name="Shisheva A."/>
            <person name="Freeman M.R."/>
        </authorList>
    </citation>
    <scope>FUNCTION</scope>
    <scope>INTERACTION WITH EGFR</scope>
</reference>
<reference key="12">
    <citation type="journal article" date="2007" name="J. Biol. Chem.">
        <title>Core protein machinery for mammalian phosphatidylinositol 3,5-bisphosphate synthesis and turnover that regulates the progression of endosomal transport. Novel Sac phosphatase joins the ArPIKfyve-PIKfyve complex.</title>
        <authorList>
            <person name="Sbrissa D."/>
            <person name="Ikonomov O.C."/>
            <person name="Fu Z."/>
            <person name="Ijuin T."/>
            <person name="Gruenberg J."/>
            <person name="Takenawa T."/>
            <person name="Shisheva A."/>
        </authorList>
    </citation>
    <scope>FUNCTION</scope>
    <scope>SUBCELLULAR LOCATION</scope>
    <scope>IDENTIFICATION IN THE PI(3,5)P2 REGULATORY COMPLEX</scope>
</reference>
<reference key="13">
    <citation type="journal article" date="2008" name="J. Mol. Biol.">
        <title>ArPIKfyve homomeric and heteromeric interactions scaffold PIKfyve and Sac3 in a complex to promote PIKfyve activity and functionality.</title>
        <authorList>
            <person name="Sbrissa D."/>
            <person name="Ikonomov O.C."/>
            <person name="Fenner H."/>
            <person name="Shisheva A."/>
        </authorList>
    </citation>
    <scope>IDENTIFICATION IN THE PI(3,5)P2 REGULATORY COMPLEX</scope>
</reference>
<reference key="14">
    <citation type="journal article" date="2008" name="Mol. Cell">
        <title>Kinase-selective enrichment enables quantitative phosphoproteomics of the kinome across the cell cycle.</title>
        <authorList>
            <person name="Daub H."/>
            <person name="Olsen J.V."/>
            <person name="Bairlein M."/>
            <person name="Gnad F."/>
            <person name="Oppermann F.S."/>
            <person name="Korner R."/>
            <person name="Greff Z."/>
            <person name="Keri G."/>
            <person name="Stemmann O."/>
            <person name="Mann M."/>
        </authorList>
    </citation>
    <scope>PHOSPHORYLATION [LARGE SCALE ANALYSIS] AT SER-299 AND SER-1544</scope>
    <scope>IDENTIFICATION BY MASS SPECTROMETRY [LARGE SCALE ANALYSIS]</scope>
    <source>
        <tissue>Cervix carcinoma</tissue>
    </source>
</reference>
<reference key="15">
    <citation type="journal article" date="2008" name="Proc. Natl. Acad. Sci. U.S.A.">
        <title>A quantitative atlas of mitotic phosphorylation.</title>
        <authorList>
            <person name="Dephoure N."/>
            <person name="Zhou C."/>
            <person name="Villen J."/>
            <person name="Beausoleil S.A."/>
            <person name="Bakalarski C.E."/>
            <person name="Elledge S.J."/>
            <person name="Gygi S.P."/>
        </authorList>
    </citation>
    <scope>PHOSPHORYLATION [LARGE SCALE ANALYSIS] AT SER-329</scope>
    <scope>IDENTIFICATION BY MASS SPECTROMETRY [LARGE SCALE ANALYSIS]</scope>
    <source>
        <tissue>Cervix carcinoma</tissue>
    </source>
</reference>
<reference key="16">
    <citation type="journal article" date="2009" name="Mol. Cell. Proteomics">
        <title>Large-scale proteomics analysis of the human kinome.</title>
        <authorList>
            <person name="Oppermann F.S."/>
            <person name="Gnad F."/>
            <person name="Olsen J.V."/>
            <person name="Hornberger R."/>
            <person name="Greff Z."/>
            <person name="Keri G."/>
            <person name="Mann M."/>
            <person name="Daub H."/>
        </authorList>
    </citation>
    <scope>ACETYLATION [LARGE SCALE ANALYSIS] AT ALA-2</scope>
    <scope>PHOSPHORYLATION [LARGE SCALE ANALYSIS] AT SER-299; SER-1544; SER-1549 AND SER-1754</scope>
    <scope>CLEAVAGE OF INITIATOR METHIONINE [LARGE SCALE ANALYSIS]</scope>
    <scope>IDENTIFICATION BY MASS SPECTROMETRY [LARGE SCALE ANALYSIS]</scope>
</reference>
<reference key="17">
    <citation type="journal article" date="2010" name="Biochem. Biophys. Res. Commun.">
        <title>Regulation of PIKfyve phosphorylation by insulin and osmotic stress.</title>
        <authorList>
            <person name="Hill E.V."/>
            <person name="Hudson C.A."/>
            <person name="Vertommen D."/>
            <person name="Rider M.H."/>
            <person name="Tavare J.M."/>
        </authorList>
    </citation>
    <scope>PHOSPHORYLATION AT SER-318</scope>
</reference>
<reference key="18">
    <citation type="journal article" date="2011" name="Sci. Signal.">
        <title>System-wide temporal characterization of the proteome and phosphoproteome of human embryonic stem cell differentiation.</title>
        <authorList>
            <person name="Rigbolt K.T."/>
            <person name="Prokhorova T.A."/>
            <person name="Akimov V."/>
            <person name="Henningsen J."/>
            <person name="Johansen P.T."/>
            <person name="Kratchmarova I."/>
            <person name="Kassem M."/>
            <person name="Mann M."/>
            <person name="Olsen J.V."/>
            <person name="Blagoev B."/>
        </authorList>
    </citation>
    <scope>IDENTIFICATION BY MASS SPECTROMETRY [LARGE SCALE ANALYSIS]</scope>
</reference>
<reference key="19">
    <citation type="journal article" date="2012" name="Am. J. Physiol.">
        <title>Functional dissociation between PIKfyve-synthesized PtdIns5P and PtdIns(3,5)P2 by means of the PIKfyve inhibitor YM201636.</title>
        <authorList>
            <person name="Sbrissa D."/>
            <person name="Ikonomov O.C."/>
            <person name="Filios C."/>
            <person name="Delvecchio K."/>
            <person name="Shisheva A."/>
        </authorList>
    </citation>
    <scope>FUNCTION</scope>
    <scope>CATALYTIC ACTIVITY</scope>
    <scope>ACTIVITY REGULATION</scope>
</reference>
<reference key="20">
    <citation type="journal article" date="2012" name="Curr. Top. Microbiol. Immunol.">
        <title>PIKfyve and its Lipid products in health and in sickness.</title>
        <authorList>
            <person name="Shisheva A."/>
        </authorList>
    </citation>
    <scope>REVIEW</scope>
</reference>
<reference key="21">
    <citation type="journal article" date="2012" name="Proc. Natl. Acad. Sci. U.S.A.">
        <title>N-terminal acetylome analyses and functional insights of the N-terminal acetyltransferase NatB.</title>
        <authorList>
            <person name="Van Damme P."/>
            <person name="Lasa M."/>
            <person name="Polevoda B."/>
            <person name="Gazquez C."/>
            <person name="Elosegui-Artola A."/>
            <person name="Kim D.S."/>
            <person name="De Juan-Pardo E."/>
            <person name="Demeyer K."/>
            <person name="Hole K."/>
            <person name="Larrea E."/>
            <person name="Timmerman E."/>
            <person name="Prieto J."/>
            <person name="Arnesen T."/>
            <person name="Sherman F."/>
            <person name="Gevaert K."/>
            <person name="Aldabe R."/>
        </authorList>
    </citation>
    <scope>ACETYLATION [LARGE SCALE ANALYSIS] AT ALA-2</scope>
    <scope>CLEAVAGE OF INITIATOR METHIONINE [LARGE SCALE ANALYSIS]</scope>
    <scope>IDENTIFICATION BY MASS SPECTROMETRY [LARGE SCALE ANALYSIS]</scope>
</reference>
<reference key="22">
    <citation type="journal article" date="2013" name="J. Proteome Res.">
        <title>Toward a comprehensive characterization of a human cancer cell phosphoproteome.</title>
        <authorList>
            <person name="Zhou H."/>
            <person name="Di Palma S."/>
            <person name="Preisinger C."/>
            <person name="Peng M."/>
            <person name="Polat A.N."/>
            <person name="Heck A.J."/>
            <person name="Mohammed S."/>
        </authorList>
    </citation>
    <scope>PHOSPHORYLATION [LARGE SCALE ANALYSIS] AT SER-48; SER-88; SER-299; SER-307; SER-1544 AND SER-1549</scope>
    <scope>IDENTIFICATION BY MASS SPECTROMETRY [LARGE SCALE ANALYSIS]</scope>
    <source>
        <tissue>Cervix carcinoma</tissue>
        <tissue>Erythroleukemia</tissue>
    </source>
</reference>
<reference key="23">
    <citation type="journal article" date="2016" name="Dev. Cell">
        <title>PIKfyve Regulates Vacuole Maturation and Nutrient Recovery following Engulfment.</title>
        <authorList>
            <person name="Krishna S."/>
            <person name="Palm W."/>
            <person name="Lee Y."/>
            <person name="Yang W."/>
            <person name="Bandyopadhyay U."/>
            <person name="Xu H."/>
            <person name="Florey O."/>
            <person name="Thompson C.B."/>
            <person name="Overholtzer M."/>
        </authorList>
    </citation>
    <scope>FUNCTION</scope>
</reference>
<reference key="24">
    <citation type="journal article" date="2017" name="J. Immunol.">
        <title>The Lipid Kinase PIKfyve Coordinates the Neutrophil Immune Response through the Activation of the Rac GTPase.</title>
        <authorList>
            <person name="Dayam R.M."/>
            <person name="Sun C.X."/>
            <person name="Choy C.H."/>
            <person name="Mancuso G."/>
            <person name="Glogauer M."/>
            <person name="Botelho R.J."/>
        </authorList>
    </citation>
    <scope>FUNCTION</scope>
</reference>
<reference key="25">
    <citation type="journal article" date="2018" name="PLoS Genet.">
        <title>PIKfyve regulates melanosome biogenesis.</title>
        <authorList>
            <person name="Liggins M.C."/>
            <person name="Flesher J.L."/>
            <person name="Jahid S."/>
            <person name="Vasudeva P."/>
            <person name="Eby V."/>
            <person name="Takasuga S."/>
            <person name="Sasaki J."/>
            <person name="Sasaki T."/>
            <person name="Boissy R.E."/>
            <person name="Ganesan A.K."/>
        </authorList>
    </citation>
    <scope>FUNCTION</scope>
    <scope>ACTIVITY REGULATION</scope>
</reference>
<reference key="26">
    <citation type="journal article" date="2019" name="IScience">
        <title>The Phosphoinositide Kinase PIKfyve Promotes Cathepsin-S-Mediated Major Histocompatibility Complex Class II Antigen Presentation.</title>
        <authorList>
            <person name="Baranov M.V."/>
            <person name="Bianchi F."/>
            <person name="Schirmacher A."/>
            <person name="van Aart M.A.C."/>
            <person name="Maassen S."/>
            <person name="Muntjewerff E.M."/>
            <person name="Dingjan I."/>
            <person name="Ter Beest M."/>
            <person name="Verdoes M."/>
            <person name="Keyser S.G.L."/>
            <person name="Bertozzi C.R."/>
            <person name="Diederichsen U."/>
            <person name="van den Bogaart G."/>
        </authorList>
    </citation>
    <scope>FUNCTION</scope>
    <scope>SUBCELLULAR LOCATION</scope>
    <scope>ACTIVITY REGULATION</scope>
</reference>
<reference key="27">
    <citation type="journal article" date="2020" name="Nat. Commun.">
        <title>Characterization of spike glycoprotein of SARS-CoV-2 on virus entry and its immune cross-reactivity with SARS-CoV.</title>
        <authorList>
            <person name="Ou X."/>
            <person name="Liu Y."/>
            <person name="Lei X."/>
            <person name="Li P."/>
            <person name="Mi D."/>
            <person name="Ren L."/>
            <person name="Guo L."/>
            <person name="Guo R."/>
            <person name="Chen T."/>
            <person name="Hu J."/>
            <person name="Xiang Z."/>
            <person name="Mu Z."/>
            <person name="Chen X."/>
            <person name="Chen J."/>
            <person name="Hu K."/>
            <person name="Jin Q."/>
            <person name="Wang J."/>
            <person name="Qian Z."/>
        </authorList>
    </citation>
    <scope>FUNCTION (MICROBIAL INFECTION)</scope>
    <scope>ACTIVITY REGULATION</scope>
</reference>
<reference evidence="30" key="28">
    <citation type="journal article" date="2020" name="Mol. Cell">
        <title>Insights into Lysosomal PI(3,5)P2 Homeostasis from a Structural-Biochemical Analysis of the PIKfyve Lipid Kinase Complex.</title>
        <authorList>
            <person name="Lees J.A."/>
            <person name="Li P."/>
            <person name="Kumar N."/>
            <person name="Weisman L.S."/>
            <person name="Reinisch K.M."/>
        </authorList>
    </citation>
    <scope>STRUCTURE BY ELECTRON MICROSCOPY (6.60 ANGSTROMS) OF 547-983 AND 1822-2085</scope>
    <scope>IDENTIFICATION IN THE PI(3,5)P2 REGULATORY COMPLEX</scope>
    <scope>FUNCTION</scope>
    <scope>CATALYTIC ACTIVITY</scope>
    <scope>PHOSPHORYLATION AT SER-23; SER-48; SER-1522; SER-1669; SER-1969 AND SER-2053</scope>
    <scope>MUTAGENESIS OF LYS-1877 AND SER-2053</scope>
</reference>
<reference key="29">
    <citation type="journal article" date="2005" name="Am. J. Hum. Genet.">
        <title>Mutations in PIP5K3 are associated with Francois-Neetens mouchetee fleck corneal dystrophy.</title>
        <authorList>
            <person name="Li S."/>
            <person name="Tiab L."/>
            <person name="Jiao X."/>
            <person name="Munier F.L."/>
            <person name="Zografos L."/>
            <person name="Frueh B.E."/>
            <person name="Sergeev Y."/>
            <person name="Smith J."/>
            <person name="Rubin B."/>
            <person name="Meallet M.A."/>
            <person name="Forster R.K."/>
            <person name="Hejtmancik J.F."/>
            <person name="Schorderet D.F."/>
        </authorList>
    </citation>
    <scope>VARIANTS CFD 988-GLN--CYS-2098 DEL AND ARG-1103</scope>
</reference>
<sequence>MATDDKTSPTLDSANDLPRSPTSPSHLTHFKPLTPDQDEPPFKSAYSSFVNLFRFNKERAEGGQGEQQPLSGSWTSPQLPSRTQSVRSPTPYKKQLNEELQRRSSALDTRRKAEPTFGGHDPRTAVQLRSLSTVLKRLKEIMEGKSQDSDLKQYWMPDSQCKECYDCSEKFTTFRRRHHCRLCGQIFCSRCCNQEIPGKFMGYTGDLRACTYCRKIALSYAHSTDSNSIGEDLNALSDSACSVSVLDPSEPRTPVGSRKASRNIFLEDDLAWQSLIHPDSSNTPLSTRLVSVQEDAGKSPARNRSASITNLSLDRSGSPMVPSYETSVSPQANRTYVRTETTEDERKILLDSVQLKDLWKKICHHSSGMEFQDHRYWLRTHPNCIVGKELVNWLIRNGHIATRAQAIAIGQAMVDGRWLDCVSHHDQLFRDEYALYRPLQSTEFSETPSPDSDSVNSVEGHSEPSWFKDIKFDDSDTEQIAEEGDDNLANSASPSKRTSVSSFQSTVDSDSAASISLNVELDNVNFHIKKPSKYPHVPPHPADQKEYLISDTGGQQLSISDAFIKESLFNRRVEEKSKELPFTPLGWHHNNLELLREENGEKQAMERLLSANHNHMMALLQQLLHSDSLSSSWRDIIVSLVCQVVQTVRPDVKNQDDDMDIRQFVHIKKIPGGKKFDSVVVNGFVCTKNIAHKKMSSCIKNPKILLLKCSIEYLYREETKFTCIDPIVLQEREFLKNYVQRIVDVRPTLVLVEKTVSRIAQDMLLEHGITLVINVKSQVLERISRMTQGDLVMSMDQLLTKPHLGTCHKFYMQIFQLPNEQTKTLMFFEGCPQHLGCTIKLRGGSDYELARVKEILIFMICVAYHSQLEISFLMDEFAMPPTLMQNPSFHSLIEGRGHEGAVQEQYGGGSIPWDPDIPPESLPCDDSSLLELRIVFEKGEQENKNLPQAVASVKHQEHSTTACPAGLPCAFFAPVPESLLPLPVDDQQDALGSEQPETLQQTVVLQDPKSQIRAFRDPLQDDTGLYVTEEVTSSEDKRKTYSLAFKQELKDVILCISPVITFREPFLLTEKGMRCSTRDYFAEQVYWSPLLNKEFKEMENRRKKQLLRDLSGLQGMNGSIQAKSIQVLPSHELVSTRIAEHLGDSQSLGRMLADYRARGGRIQPKNSDPFAHSKDASSTSSGQSGSKNEGDEERGLILSDAVWSTKVDCLNPINHQRLCVLFSSSSAQSSNAPSACVSPWIVTMEFYGKNDLTLGIFLERYCFRPSYQCPSMFCDTPMVHHIRRFVHGQGCVQIILKELDSPVPGYQHTILTYSWCRICKQVTPVVALSNESWSMSFAKYLELRFYGHQYTRRANAEPCGHSIHHDYHQYFSYNQMVASFSYSPIRLLEVCVPLPKIFIKRQAPLKVSLLQDLKDFFQKVSQVYVAIDERLASLKTDTFSKTREEKMEDIFAQKEMEEGEFKNWIEKMQARLMSSSVDTPQQLQSVFESLIAKKQSLCEVLQAWNNRLQDLFQQEKGRKRPSVPPSPGRLRQGEESKISAMDASPRNISPGLQNGEKEDRFLTTLSSQSSTSSTHLQLPTPPEVMSEQSVGGPPELDTASSSEDVFDGHLLGSTDSQVKEKSTMKAIFANLLPGNSYNPIPFPFDPDKHYLMYEHERVPIAVCEKEPSSIIAFALSCKEYRNALEELSKATQWNSAEEGLPTNSTSDSRPKSSSPIRLPEMSGGQTNRTTETEPQPTKKASGMLSFFRGTAGKSPDLSSQKRETLRGADSAYYQVGQTGKEGTENQGVEPQDEVDGGDTQKKQLINPHVELQFSDANAKFYCRLYYAGEFHKMREVILDSSEEDFIRSLSHSSPWQARGGKSGAAFYATEDDRFILKQMPRLEVQSFLDFAPHYFNYITNAVQQKRPTALAKILGVYRIGYKNSQNNTEKKLDLLVMENLFYGRKMAQVFDLKGSLRNRNVKTDTGKESCDVVLLDENLLKMVRDNPLYIRSHSKAVLRTSIHSDSHFLSSHLIIDYSLLVGRDDTSNELVVGIIDYIRTFTWDKKLEMVVKSTGILGGQGKMPTVVSPELYRTRFCEAMDKYFLMVPDHWTGLGLNC</sequence>
<evidence type="ECO:0000250" key="1">
    <source>
        <dbReference type="UniProtKB" id="Q9Z1T6"/>
    </source>
</evidence>
<evidence type="ECO:0000255" key="2">
    <source>
        <dbReference type="PROSITE-ProRule" id="PRU00066"/>
    </source>
</evidence>
<evidence type="ECO:0000255" key="3">
    <source>
        <dbReference type="PROSITE-ProRule" id="PRU00091"/>
    </source>
</evidence>
<evidence type="ECO:0000255" key="4">
    <source>
        <dbReference type="PROSITE-ProRule" id="PRU00781"/>
    </source>
</evidence>
<evidence type="ECO:0000256" key="5">
    <source>
        <dbReference type="SAM" id="MobiDB-lite"/>
    </source>
</evidence>
<evidence type="ECO:0000269" key="6">
    <source>
    </source>
</evidence>
<evidence type="ECO:0000269" key="7">
    <source>
    </source>
</evidence>
<evidence type="ECO:0000269" key="8">
    <source>
    </source>
</evidence>
<evidence type="ECO:0000269" key="9">
    <source>
    </source>
</evidence>
<evidence type="ECO:0000269" key="10">
    <source>
    </source>
</evidence>
<evidence type="ECO:0000269" key="11">
    <source>
    </source>
</evidence>
<evidence type="ECO:0000269" key="12">
    <source>
    </source>
</evidence>
<evidence type="ECO:0000269" key="13">
    <source>
    </source>
</evidence>
<evidence type="ECO:0000269" key="14">
    <source>
    </source>
</evidence>
<evidence type="ECO:0000269" key="15">
    <source>
    </source>
</evidence>
<evidence type="ECO:0000269" key="16">
    <source>
    </source>
</evidence>
<evidence type="ECO:0000269" key="17">
    <source>
    </source>
</evidence>
<evidence type="ECO:0000269" key="18">
    <source>
    </source>
</evidence>
<evidence type="ECO:0000269" key="19">
    <source>
    </source>
</evidence>
<evidence type="ECO:0000269" key="20">
    <source>
    </source>
</evidence>
<evidence type="ECO:0000269" key="21">
    <source ref="1"/>
</evidence>
<evidence type="ECO:0000269" key="22">
    <source ref="3"/>
</evidence>
<evidence type="ECO:0000303" key="23">
    <source>
    </source>
</evidence>
<evidence type="ECO:0000303" key="24">
    <source>
    </source>
</evidence>
<evidence type="ECO:0000305" key="25"/>
<evidence type="ECO:0000305" key="26">
    <source>
    </source>
</evidence>
<evidence type="ECO:0000305" key="27">
    <source>
    </source>
</evidence>
<evidence type="ECO:0000305" key="28">
    <source>
    </source>
</evidence>
<evidence type="ECO:0000312" key="29">
    <source>
        <dbReference type="HGNC" id="HGNC:23785"/>
    </source>
</evidence>
<evidence type="ECO:0007744" key="30">
    <source>
        <dbReference type="PDB" id="7K2V"/>
    </source>
</evidence>
<evidence type="ECO:0007744" key="31">
    <source>
    </source>
</evidence>
<evidence type="ECO:0007744" key="32">
    <source>
    </source>
</evidence>
<evidence type="ECO:0007744" key="33">
    <source>
    </source>
</evidence>
<evidence type="ECO:0007744" key="34">
    <source>
    </source>
</evidence>
<evidence type="ECO:0007744" key="35">
    <source>
    </source>
</evidence>
<protein>
    <recommendedName>
        <fullName evidence="25">1-phosphatidylinositol 3-phosphate 5-kinase</fullName>
        <shortName>Phosphatidylinositol 3-phosphate 5-kinase</shortName>
        <ecNumber evidence="10 20">2.7.1.150</ecNumber>
    </recommendedName>
    <alternativeName>
        <fullName>FYVE finger-containing phosphoinositide kinase</fullName>
    </alternativeName>
    <alternativeName>
        <fullName>PIKfyve</fullName>
    </alternativeName>
    <alternativeName>
        <fullName>Phosphatidylinositol 3-phosphate 5-kinase type III</fullName>
        <shortName>PIPkin-III</shortName>
        <shortName>Type III PIP kinase</shortName>
    </alternativeName>
    <alternativeName>
        <fullName>Serine-protein kinase PIKFYVE</fullName>
        <ecNumber evidence="20">2.7.11.1</ecNumber>
    </alternativeName>
</protein>
<accession>Q9Y2I7</accession>
<accession>Q08AR7</accession>
<accession>Q08AR8</accession>
<accession>Q53ST3</accession>
<accession>Q53T36</accession>
<accession>Q8N5H0</accession>
<accession>Q8NB67</accession>
<keyword id="KW-0002">3D-structure</keyword>
<keyword id="KW-0007">Acetylation</keyword>
<keyword id="KW-0025">Alternative splicing</keyword>
<keyword id="KW-0067">ATP-binding</keyword>
<keyword id="KW-1212">Corneal dystrophy</keyword>
<keyword id="KW-0968">Cytoplasmic vesicle</keyword>
<keyword id="KW-0225">Disease variant</keyword>
<keyword id="KW-0967">Endosome</keyword>
<keyword id="KW-0945">Host-virus interaction</keyword>
<keyword id="KW-0418">Kinase</keyword>
<keyword id="KW-0443">Lipid metabolism</keyword>
<keyword id="KW-0472">Membrane</keyword>
<keyword id="KW-0479">Metal-binding</keyword>
<keyword id="KW-0547">Nucleotide-binding</keyword>
<keyword id="KW-0597">Phosphoprotein</keyword>
<keyword id="KW-1267">Proteomics identification</keyword>
<keyword id="KW-1185">Reference proteome</keyword>
<keyword id="KW-0808">Transferase</keyword>
<keyword id="KW-0862">Zinc</keyword>
<keyword id="KW-0863">Zinc-finger</keyword>
<organism>
    <name type="scientific">Homo sapiens</name>
    <name type="common">Human</name>
    <dbReference type="NCBI Taxonomy" id="9606"/>
    <lineage>
        <taxon>Eukaryota</taxon>
        <taxon>Metazoa</taxon>
        <taxon>Chordata</taxon>
        <taxon>Craniata</taxon>
        <taxon>Vertebrata</taxon>
        <taxon>Euteleostomi</taxon>
        <taxon>Mammalia</taxon>
        <taxon>Eutheria</taxon>
        <taxon>Euarchontoglires</taxon>
        <taxon>Primates</taxon>
        <taxon>Haplorrhini</taxon>
        <taxon>Catarrhini</taxon>
        <taxon>Hominidae</taxon>
        <taxon>Homo</taxon>
    </lineage>
</organism>
<gene>
    <name evidence="29" type="primary">PIKFYVE</name>
    <name type="synonym">KIAA0981</name>
    <name type="synonym">PIP5K3</name>
</gene>